<protein>
    <recommendedName>
        <fullName evidence="1">Sulfate transporter CysZ</fullName>
    </recommendedName>
</protein>
<organism>
    <name type="scientific">Pseudomonas fluorescens (strain ATCC BAA-477 / NRRL B-23932 / Pf-5)</name>
    <dbReference type="NCBI Taxonomy" id="220664"/>
    <lineage>
        <taxon>Bacteria</taxon>
        <taxon>Pseudomonadati</taxon>
        <taxon>Pseudomonadota</taxon>
        <taxon>Gammaproteobacteria</taxon>
        <taxon>Pseudomonadales</taxon>
        <taxon>Pseudomonadaceae</taxon>
        <taxon>Pseudomonas</taxon>
    </lineage>
</organism>
<evidence type="ECO:0000255" key="1">
    <source>
        <dbReference type="HAMAP-Rule" id="MF_00468"/>
    </source>
</evidence>
<comment type="function">
    <text evidence="1">High affinity, high specificity proton-dependent sulfate transporter, which mediates sulfate uptake. Provides the sulfur source for the cysteine synthesis pathway.</text>
</comment>
<comment type="subcellular location">
    <subcellularLocation>
        <location evidence="1">Cell inner membrane</location>
        <topology evidence="1">Multi-pass membrane protein</topology>
    </subcellularLocation>
</comment>
<comment type="similarity">
    <text evidence="1">Belongs to the CysZ family.</text>
</comment>
<accession>Q4KI58</accession>
<gene>
    <name evidence="1" type="primary">cysZ</name>
    <name type="ordered locus">PFL_0944</name>
</gene>
<dbReference type="EMBL" id="CP000076">
    <property type="protein sequence ID" value="AAY90231.2"/>
    <property type="molecule type" value="Genomic_DNA"/>
</dbReference>
<dbReference type="RefSeq" id="WP_011059298.1">
    <property type="nucleotide sequence ID" value="NC_004129.6"/>
</dbReference>
<dbReference type="SMR" id="Q4KI58"/>
<dbReference type="STRING" id="220664.PFL_0944"/>
<dbReference type="DNASU" id="3475802"/>
<dbReference type="KEGG" id="pfl:PFL_0944"/>
<dbReference type="PATRIC" id="fig|220664.5.peg.968"/>
<dbReference type="eggNOG" id="COG2981">
    <property type="taxonomic scope" value="Bacteria"/>
</dbReference>
<dbReference type="HOGENOM" id="CLU_070331_1_0_6"/>
<dbReference type="Proteomes" id="UP000008540">
    <property type="component" value="Chromosome"/>
</dbReference>
<dbReference type="GO" id="GO:0005886">
    <property type="term" value="C:plasma membrane"/>
    <property type="evidence" value="ECO:0007669"/>
    <property type="project" value="UniProtKB-SubCell"/>
</dbReference>
<dbReference type="GO" id="GO:0009675">
    <property type="term" value="F:high-affinity sulfate:proton symporter activity"/>
    <property type="evidence" value="ECO:0007669"/>
    <property type="project" value="TreeGrafter"/>
</dbReference>
<dbReference type="GO" id="GO:0019344">
    <property type="term" value="P:cysteine biosynthetic process"/>
    <property type="evidence" value="ECO:0007669"/>
    <property type="project" value="UniProtKB-UniRule"/>
</dbReference>
<dbReference type="GO" id="GO:0000103">
    <property type="term" value="P:sulfate assimilation"/>
    <property type="evidence" value="ECO:0007669"/>
    <property type="project" value="InterPro"/>
</dbReference>
<dbReference type="HAMAP" id="MF_00468">
    <property type="entry name" value="CysZ"/>
    <property type="match status" value="1"/>
</dbReference>
<dbReference type="InterPro" id="IPR050480">
    <property type="entry name" value="CysZ_sulfate_transptr"/>
</dbReference>
<dbReference type="InterPro" id="IPR022985">
    <property type="entry name" value="Sulfate_CysZ"/>
</dbReference>
<dbReference type="NCBIfam" id="NF003433">
    <property type="entry name" value="PRK04949.1"/>
    <property type="match status" value="1"/>
</dbReference>
<dbReference type="PANTHER" id="PTHR37468">
    <property type="entry name" value="SULFATE TRANSPORTER CYSZ"/>
    <property type="match status" value="1"/>
</dbReference>
<dbReference type="PANTHER" id="PTHR37468:SF1">
    <property type="entry name" value="SULFATE TRANSPORTER CYSZ"/>
    <property type="match status" value="1"/>
</dbReference>
<dbReference type="Pfam" id="PF07264">
    <property type="entry name" value="EI24"/>
    <property type="match status" value="1"/>
</dbReference>
<keyword id="KW-0028">Amino-acid biosynthesis</keyword>
<keyword id="KW-0997">Cell inner membrane</keyword>
<keyword id="KW-1003">Cell membrane</keyword>
<keyword id="KW-0198">Cysteine biosynthesis</keyword>
<keyword id="KW-0472">Membrane</keyword>
<keyword id="KW-0764">Sulfate transport</keyword>
<keyword id="KW-0812">Transmembrane</keyword>
<keyword id="KW-1133">Transmembrane helix</keyword>
<keyword id="KW-0813">Transport</keyword>
<feature type="chain" id="PRO_0000204345" description="Sulfate transporter CysZ">
    <location>
        <begin position="1"/>
        <end position="249"/>
    </location>
</feature>
<feature type="transmembrane region" description="Helical" evidence="1">
    <location>
        <begin position="26"/>
        <end position="46"/>
    </location>
</feature>
<feature type="transmembrane region" description="Helical" evidence="1">
    <location>
        <begin position="71"/>
        <end position="91"/>
    </location>
</feature>
<feature type="transmembrane region" description="Helical" evidence="1">
    <location>
        <begin position="150"/>
        <end position="170"/>
    </location>
</feature>
<feature type="transmembrane region" description="Helical" evidence="1">
    <location>
        <begin position="206"/>
        <end position="226"/>
    </location>
</feature>
<proteinExistence type="inferred from homology"/>
<name>CYSZ_PSEF5</name>
<sequence length="249" mass="28147">MPAPVLSGPQYLREGLKLVLSPGLRLFVLLPLAINLVLFVGLIYFAGHQFSLWVDALMPSLPSWLSFLSYVIWPLFVVLVAFMVFFSFTMLANIIAAPFNGFLSEKVETVVRGTDDFPPFSWGELIAMIPRTLAREMRKLGYFLPRAIGLFILSLIPVVNLIAAPLWLLFGIWMMAIQYIDYPADNHKMSWQDMLAWLRQKRWQSLGFGGIVYLALLIPLVNILMMPAAVAGATLFWVRERGVENLPAK</sequence>
<reference key="1">
    <citation type="journal article" date="2005" name="Nat. Biotechnol.">
        <title>Complete genome sequence of the plant commensal Pseudomonas fluorescens Pf-5.</title>
        <authorList>
            <person name="Paulsen I.T."/>
            <person name="Press C.M."/>
            <person name="Ravel J."/>
            <person name="Kobayashi D.Y."/>
            <person name="Myers G.S.A."/>
            <person name="Mavrodi D.V."/>
            <person name="DeBoy R.T."/>
            <person name="Seshadri R."/>
            <person name="Ren Q."/>
            <person name="Madupu R."/>
            <person name="Dodson R.J."/>
            <person name="Durkin A.S."/>
            <person name="Brinkac L.M."/>
            <person name="Daugherty S.C."/>
            <person name="Sullivan S.A."/>
            <person name="Rosovitz M.J."/>
            <person name="Gwinn M.L."/>
            <person name="Zhou L."/>
            <person name="Schneider D.J."/>
            <person name="Cartinhour S.W."/>
            <person name="Nelson W.C."/>
            <person name="Weidman J."/>
            <person name="Watkins K."/>
            <person name="Tran K."/>
            <person name="Khouri H."/>
            <person name="Pierson E.A."/>
            <person name="Pierson L.S. III"/>
            <person name="Thomashow L.S."/>
            <person name="Loper J.E."/>
        </authorList>
    </citation>
    <scope>NUCLEOTIDE SEQUENCE [LARGE SCALE GENOMIC DNA]</scope>
    <source>
        <strain>ATCC BAA-477 / NRRL B-23932 / Pf-5</strain>
    </source>
</reference>